<gene>
    <name type="ORF">IIV3-028R</name>
</gene>
<proteinExistence type="predicted"/>
<reference key="1">
    <citation type="journal article" date="2006" name="J. Virol.">
        <title>Genome of invertebrate iridescent virus type 3 (mosquito iridescent virus).</title>
        <authorList>
            <person name="Delhon G."/>
            <person name="Tulman E.R."/>
            <person name="Afonso C.L."/>
            <person name="Lu Z."/>
            <person name="Becnel J.J."/>
            <person name="Moser B.A."/>
            <person name="Kutish G.F."/>
            <person name="Rock D.L."/>
        </authorList>
    </citation>
    <scope>NUCLEOTIDE SEQUENCE [LARGE SCALE GENOMIC DNA]</scope>
</reference>
<sequence length="337" mass="38575">MDQYITLVELYIYDCNLFKSKNLKSFYKVHRVPEGDIVPKRRGGQLAGVTKSWVETNLVHFPLWLSEWDETRWGVLNHYPLESWLEKNVSSKVPVNPVMWNFDSECLVYFFHNGRRTPFLTPKGVVKLQVFYNLMSGKEVEWFYEISNGFLKPHLHQLSNVRELVRLKHAPVVVGAGGPRLVTEGVYSLRDDDFVVDCSQIAAVKRAIERGESHQSLRKYQCPLFVALTDKFQDTVKLVEKKFEVQLNELKAETTIQVLREQLRQEKKLKEQVLSLTQSFIPTIGGRGEEFGKPDETPSSASVGDDNFPSSTNHTFEARRRPSSLSSGGALKPSKIL</sequence>
<organism>
    <name type="scientific">Invertebrate iridescent virus 3</name>
    <name type="common">IIV-3</name>
    <name type="synonym">Mosquito iridescent virus</name>
    <dbReference type="NCBI Taxonomy" id="345201"/>
    <lineage>
        <taxon>Viruses</taxon>
        <taxon>Varidnaviria</taxon>
        <taxon>Bamfordvirae</taxon>
        <taxon>Nucleocytoviricota</taxon>
        <taxon>Megaviricetes</taxon>
        <taxon>Pimascovirales</taxon>
        <taxon>Iridoviridae</taxon>
        <taxon>Betairidovirinae</taxon>
        <taxon>Chloriridovirus</taxon>
    </lineage>
</organism>
<evidence type="ECO:0000255" key="1"/>
<evidence type="ECO:0000256" key="2">
    <source>
        <dbReference type="SAM" id="MobiDB-lite"/>
    </source>
</evidence>
<keyword id="KW-0175">Coiled coil</keyword>
<keyword id="KW-1185">Reference proteome</keyword>
<protein>
    <recommendedName>
        <fullName>Uncharacterized protein 028R</fullName>
    </recommendedName>
</protein>
<dbReference type="EMBL" id="DQ643392">
    <property type="protein sequence ID" value="ABF82058.1"/>
    <property type="molecule type" value="Genomic_DNA"/>
</dbReference>
<dbReference type="RefSeq" id="YP_654600.1">
    <property type="nucleotide sequence ID" value="NC_008187.1"/>
</dbReference>
<dbReference type="SMR" id="Q197D2"/>
<dbReference type="KEGG" id="vg:4156338"/>
<dbReference type="OrthoDB" id="17062at10239"/>
<dbReference type="Proteomes" id="UP000001358">
    <property type="component" value="Genome"/>
</dbReference>
<feature type="chain" id="PRO_0000377947" description="Uncharacterized protein 028R">
    <location>
        <begin position="1"/>
        <end position="337"/>
    </location>
</feature>
<feature type="region of interest" description="Disordered" evidence="2">
    <location>
        <begin position="285"/>
        <end position="337"/>
    </location>
</feature>
<feature type="coiled-coil region" evidence="1">
    <location>
        <begin position="248"/>
        <end position="276"/>
    </location>
</feature>
<feature type="compositionally biased region" description="Basic and acidic residues" evidence="2">
    <location>
        <begin position="287"/>
        <end position="296"/>
    </location>
</feature>
<feature type="compositionally biased region" description="Polar residues" evidence="2">
    <location>
        <begin position="297"/>
        <end position="315"/>
    </location>
</feature>
<name>028R_IIV3</name>
<accession>Q197D2</accession>
<organismHost>
    <name type="scientific">Aedes vexans</name>
    <name type="common">Inland floodwater mosquito</name>
    <name type="synonym">Culex vexans</name>
    <dbReference type="NCBI Taxonomy" id="7163"/>
</organismHost>
<organismHost>
    <name type="scientific">Culex territans</name>
    <dbReference type="NCBI Taxonomy" id="42431"/>
</organismHost>
<organismHost>
    <name type="scientific">Culiseta annulata</name>
    <dbReference type="NCBI Taxonomy" id="332058"/>
</organismHost>
<organismHost>
    <name type="scientific">Ochlerotatus sollicitans</name>
    <name type="common">eastern saltmarsh mosquito</name>
    <dbReference type="NCBI Taxonomy" id="310513"/>
</organismHost>
<organismHost>
    <name type="scientific">Ochlerotatus taeniorhynchus</name>
    <name type="common">Black salt marsh mosquito</name>
    <name type="synonym">Aedes taeniorhynchus</name>
    <dbReference type="NCBI Taxonomy" id="329105"/>
</organismHost>
<organismHost>
    <name type="scientific">Psorophora ferox</name>
    <dbReference type="NCBI Taxonomy" id="7183"/>
</organismHost>